<dbReference type="EMBL" id="M30049">
    <property type="protein sequence ID" value="AAA27766.1"/>
    <property type="status" value="ALT_SEQ"/>
    <property type="molecule type" value="Genomic_DNA"/>
</dbReference>
<dbReference type="GO" id="GO:0005576">
    <property type="term" value="C:extracellular region"/>
    <property type="evidence" value="ECO:0007669"/>
    <property type="project" value="UniProtKB-SubCell"/>
</dbReference>
<dbReference type="GO" id="GO:0005179">
    <property type="term" value="F:hormone activity"/>
    <property type="evidence" value="ECO:0007669"/>
    <property type="project" value="UniProtKB-KW"/>
</dbReference>
<dbReference type="GO" id="GO:0007218">
    <property type="term" value="P:neuropeptide signaling pathway"/>
    <property type="evidence" value="ECO:0007669"/>
    <property type="project" value="UniProtKB-KW"/>
</dbReference>
<dbReference type="InterPro" id="IPR003424">
    <property type="entry name" value="ELH"/>
</dbReference>
<dbReference type="Pfam" id="PF02323">
    <property type="entry name" value="ELH"/>
    <property type="match status" value="1"/>
</dbReference>
<accession>P17686</accession>
<keyword id="KW-0027">Amidation</keyword>
<keyword id="KW-0165">Cleavage on pair of basic residues</keyword>
<keyword id="KW-0372">Hormone</keyword>
<keyword id="KW-0527">Neuropeptide</keyword>
<keyword id="KW-0964">Secreted</keyword>
<keyword id="KW-0732">Signal</keyword>
<reference key="1">
    <citation type="journal article" date="1986" name="J. Neurosci.">
        <title>Egg-laying hormone genes of Aplysia: evolution of the ELH gene family.</title>
        <authorList>
            <person name="Nambu J.R."/>
            <person name="Scheller R.H."/>
        </authorList>
    </citation>
    <scope>NUCLEOTIDE SEQUENCE [GENOMIC DNA]</scope>
    <scope>AMIDATION AT LYS-222</scope>
</reference>
<name>ELH2_APLPA</name>
<protein>
    <recommendedName>
        <fullName>ELH type 2</fullName>
    </recommendedName>
    <component>
        <recommendedName>
            <fullName>Alpha-bag cell peptide</fullName>
            <shortName>Alpha-BCP</shortName>
        </recommendedName>
    </component>
    <component>
        <recommendedName>
            <fullName>Beta-bag cell peptide</fullName>
            <shortName>Beta-BCP</shortName>
        </recommendedName>
    </component>
    <component>
        <recommendedName>
            <fullName>Gamma-bag cell peptide</fullName>
            <shortName>Gamma-BCP</shortName>
        </recommendedName>
    </component>
    <component>
        <recommendedName>
            <fullName>Egg-laying hormone</fullName>
            <shortName>ELH</shortName>
        </recommendedName>
    </component>
    <component>
        <recommendedName>
            <fullName>Acidic peptide</fullName>
        </recommendedName>
    </component>
</protein>
<gene>
    <name type="primary">ELH2</name>
</gene>
<comment type="function">
    <text>ELH acts as a neurotransmitter locally, upon neurons of the abdominal ganglion and as a hormone by diffusing into the circulating hemolymph and modulating the activity of other organs. It specifically causes contraction of smooth muscle in the ovotestis and expulsion of the egg string.</text>
</comment>
<comment type="function">
    <text>Alpha-BCP decreases the activity of a cluster of neurons in the left upper quadrant of the abdominal ganglion.</text>
</comment>
<comment type="function">
    <text>Beta-BCP specifically excites 2 neurons, L1 and R1, in the abdominal ganglion.</text>
</comment>
<comment type="subcellular location">
    <subcellularLocation>
        <location>Secreted</location>
    </subcellularLocation>
</comment>
<comment type="tissue specificity">
    <text>Bag cell neurons.</text>
</comment>
<comment type="similarity">
    <text evidence="4">Belongs to the molluscan ELH family.</text>
</comment>
<organism>
    <name type="scientific">Aplysia parvula</name>
    <name type="common">Dwarf sea hare</name>
    <dbReference type="NCBI Taxonomy" id="6503"/>
    <lineage>
        <taxon>Eukaryota</taxon>
        <taxon>Metazoa</taxon>
        <taxon>Spiralia</taxon>
        <taxon>Lophotrochozoa</taxon>
        <taxon>Mollusca</taxon>
        <taxon>Gastropoda</taxon>
        <taxon>Heterobranchia</taxon>
        <taxon>Euthyneura</taxon>
        <taxon>Tectipleura</taxon>
        <taxon>Aplysiida</taxon>
        <taxon>Aplysioidea</taxon>
        <taxon>Aplysiidae</taxon>
        <taxon>Aplysia</taxon>
    </lineage>
</organism>
<feature type="signal peptide" evidence="1">
    <location>
        <begin position="1" status="less than"/>
        <end position="19"/>
    </location>
</feature>
<feature type="propeptide" id="PRO_0000001829">
    <location>
        <begin position="20"/>
        <end position="75"/>
    </location>
</feature>
<feature type="peptide" id="PRO_0000001830" description="Beta-bag cell peptide">
    <location>
        <begin position="78"/>
        <end position="82"/>
    </location>
</feature>
<feature type="peptide" id="PRO_0000001831" description="Gamma-bag cell peptide">
    <location>
        <begin position="85"/>
        <end position="89"/>
    </location>
</feature>
<feature type="propeptide" id="PRO_0000001832">
    <location>
        <begin position="92"/>
        <end position="130"/>
    </location>
</feature>
<feature type="peptide" id="PRO_0000001833" description="Alpha-bag cell peptide">
    <location>
        <begin position="132"/>
        <end position="140"/>
    </location>
</feature>
<feature type="propeptide" id="PRO_0000001834">
    <location>
        <begin position="144"/>
        <end position="185"/>
    </location>
</feature>
<feature type="peptide" id="PRO_0000001835" description="Egg-laying hormone">
    <location>
        <begin position="187"/>
        <end position="222"/>
    </location>
</feature>
<feature type="peptide" id="PRO_0000001836" description="Acidic peptide">
    <location>
        <begin position="226"/>
        <end position="252"/>
    </location>
</feature>
<feature type="region of interest" description="Disordered" evidence="2">
    <location>
        <begin position="145"/>
        <end position="171"/>
    </location>
</feature>
<feature type="compositionally biased region" description="Basic and acidic residues" evidence="2">
    <location>
        <begin position="145"/>
        <end position="161"/>
    </location>
</feature>
<feature type="modified residue" description="Lysine amide" evidence="3">
    <location>
        <position position="222"/>
    </location>
</feature>
<feature type="non-terminal residue">
    <location>
        <position position="1"/>
    </location>
</feature>
<evidence type="ECO:0000255" key="1"/>
<evidence type="ECO:0000256" key="2">
    <source>
        <dbReference type="SAM" id="MobiDB-lite"/>
    </source>
</evidence>
<evidence type="ECO:0000269" key="3">
    <source>
    </source>
</evidence>
<evidence type="ECO:0000305" key="4"/>
<sequence>AISLLMCLILSALCASSESAVVHGDDFAAERAVKSSPYLVLSPADEMVGMSTANEAFDKSPSYYDDDDDDFVNNEKRRLRFHKRRIRFHKRPQEVSGLKPVMMSRASASADENSLFDLYNTDGAMYQRELRAPRLRFYSLRKRAAGDEDKAEEHNPETESHSRRKRSALTPSIRSLRSSLESGIAKISINQDLKAIADMLIVEQKQEREKYLADLRQRLLNKGKRSSEVALAASDKGDEERELLNTLSNLLE</sequence>
<proteinExistence type="evidence at protein level"/>